<feature type="chain" id="PRO_0000288632" description="DNA-directed RNA polymerase I subunit RPA43">
    <location>
        <begin position="1"/>
        <end position="338"/>
    </location>
</feature>
<feature type="region of interest" description="Disordered" evidence="2">
    <location>
        <begin position="209"/>
        <end position="338"/>
    </location>
</feature>
<feature type="compositionally biased region" description="Basic residues" evidence="2">
    <location>
        <begin position="328"/>
        <end position="338"/>
    </location>
</feature>
<feature type="modified residue" description="Phosphoserine" evidence="17">
    <location>
        <position position="242"/>
    </location>
</feature>
<feature type="modified residue" description="Phosphoserine" evidence="17">
    <location>
        <position position="304"/>
    </location>
</feature>
<feature type="modified residue" description="Phosphoserine" evidence="13 14 15 16 17">
    <location>
        <position position="316"/>
    </location>
</feature>
<feature type="modified residue" description="Phosphothreonine" evidence="17">
    <location>
        <position position="322"/>
    </location>
</feature>
<feature type="modified residue" description="Phosphoserine" evidence="13 14 17">
    <location>
        <position position="328"/>
    </location>
</feature>
<feature type="helix" evidence="18">
    <location>
        <begin position="35"/>
        <end position="40"/>
    </location>
</feature>
<feature type="strand" evidence="18">
    <location>
        <begin position="44"/>
        <end position="46"/>
    </location>
</feature>
<feature type="strand" evidence="18">
    <location>
        <begin position="50"/>
        <end position="59"/>
    </location>
</feature>
<feature type="helix" evidence="18">
    <location>
        <begin position="61"/>
        <end position="63"/>
    </location>
</feature>
<feature type="strand" evidence="19">
    <location>
        <begin position="64"/>
        <end position="66"/>
    </location>
</feature>
<feature type="helix" evidence="18">
    <location>
        <begin position="67"/>
        <end position="78"/>
    </location>
</feature>
<feature type="strand" evidence="19">
    <location>
        <begin position="79"/>
        <end position="81"/>
    </location>
</feature>
<feature type="turn" evidence="18">
    <location>
        <begin position="84"/>
        <end position="87"/>
    </location>
</feature>
<feature type="strand" evidence="18">
    <location>
        <begin position="88"/>
        <end position="105"/>
    </location>
</feature>
<feature type="strand" evidence="18">
    <location>
        <begin position="112"/>
        <end position="123"/>
    </location>
</feature>
<feature type="strand" evidence="18">
    <location>
        <begin position="130"/>
        <end position="138"/>
    </location>
</feature>
<feature type="strand" evidence="18">
    <location>
        <begin position="143"/>
        <end position="147"/>
    </location>
</feature>
<feature type="turn" evidence="18">
    <location>
        <begin position="148"/>
        <end position="150"/>
    </location>
</feature>
<feature type="strand" evidence="18">
    <location>
        <begin position="151"/>
        <end position="155"/>
    </location>
</feature>
<feature type="strand" evidence="18">
    <location>
        <begin position="166"/>
        <end position="168"/>
    </location>
</feature>
<feature type="strand" evidence="18">
    <location>
        <begin position="174"/>
        <end position="180"/>
    </location>
</feature>
<feature type="strand" evidence="19">
    <location>
        <begin position="182"/>
        <end position="185"/>
    </location>
</feature>
<feature type="strand" evidence="18">
    <location>
        <begin position="188"/>
        <end position="190"/>
    </location>
</feature>
<feature type="strand" evidence="19">
    <location>
        <begin position="193"/>
        <end position="195"/>
    </location>
</feature>
<comment type="function">
    <text evidence="5 6 7">Component of RNA polymerase I (Pol I), a DNA-dependent RNA polymerase which synthesizes ribosomal RNA precursors using the four ribonucleoside triphosphates as substrates. Through its association with RRN3/TIF-IA may be involved in recruitment of Pol I to rDNA promoters.</text>
</comment>
<comment type="subunit">
    <text evidence="1 3 5 6 7">Component of the RNA polymerase I (Pol I) complex consisting of 13 subunits: a ten-subunit catalytic core composed of POLR1A/RPA1, POLR1B/RPA2, POLR1C/RPAC1, POLR1D/RPAC2, POLR1H/RPA12, POLR2E/RPABC1, POLR2F/RPABC2, POLR2H/RPABC3, POLR2K/RPABC4 and POLR2L/RPABC5; a mobile stalk subunit POLR1F/RPA43 protruding from the core and additional subunits homologous to general transcription factors POLR1E/RPA49 and POLR1G/RPA34 (PubMed:34671025, PubMed:34887565, PubMed:36271492). Interacts with RRN3/TIF-IA.</text>
</comment>
<comment type="subcellular location">
    <subcellularLocation>
        <location evidence="11">Nucleus</location>
        <location evidence="11">Nucleolus</location>
    </subcellularLocation>
</comment>
<comment type="tissue specificity">
    <text evidence="4">Widely expressed. Expressed in all fetal and adult tissues tested, with highest expression in fetal lung, liver, and kidney, and low expression in all adult tissues.</text>
</comment>
<comment type="similarity">
    <text evidence="9">Belongs to the eukaryotic RPA43 RNA polymerase subunit family.</text>
</comment>
<comment type="sequence caution" evidence="9">
    <conflict type="frameshift">
        <sequence resource="EMBL-CDS" id="AAH14574"/>
    </conflict>
</comment>
<keyword id="KW-0002">3D-structure</keyword>
<keyword id="KW-0240">DNA-directed RNA polymerase</keyword>
<keyword id="KW-0539">Nucleus</keyword>
<keyword id="KW-0597">Phosphoprotein</keyword>
<keyword id="KW-1267">Proteomics identification</keyword>
<keyword id="KW-1185">Reference proteome</keyword>
<keyword id="KW-0804">Transcription</keyword>
<name>RPA43_HUMAN</name>
<gene>
    <name evidence="12" type="primary">POLR1F</name>
    <name evidence="8" type="synonym">TWISTNB</name>
</gene>
<dbReference type="EMBL" id="AK301329">
    <property type="protein sequence ID" value="BAH13460.1"/>
    <property type="molecule type" value="mRNA"/>
</dbReference>
<dbReference type="EMBL" id="CH236948">
    <property type="protein sequence ID" value="EAL24277.1"/>
    <property type="molecule type" value="Genomic_DNA"/>
</dbReference>
<dbReference type="EMBL" id="CH471073">
    <property type="protein sequence ID" value="EAW93714.1"/>
    <property type="molecule type" value="Genomic_DNA"/>
</dbReference>
<dbReference type="EMBL" id="BC014574">
    <property type="protein sequence ID" value="AAH14574.1"/>
    <property type="status" value="ALT_FRAME"/>
    <property type="molecule type" value="mRNA"/>
</dbReference>
<dbReference type="EMBL" id="BC130298">
    <property type="protein sequence ID" value="AAI30299.1"/>
    <property type="molecule type" value="mRNA"/>
</dbReference>
<dbReference type="EMBL" id="BC130300">
    <property type="protein sequence ID" value="AAI30301.1"/>
    <property type="molecule type" value="mRNA"/>
</dbReference>
<dbReference type="EMBL" id="BK000492">
    <property type="protein sequence ID" value="DAA05732.1"/>
    <property type="molecule type" value="Genomic_DNA"/>
</dbReference>
<dbReference type="CCDS" id="CCDS34606.1"/>
<dbReference type="RefSeq" id="NP_001002926.1">
    <property type="nucleotide sequence ID" value="NM_001002926.2"/>
</dbReference>
<dbReference type="PDB" id="7OB9">
    <property type="method" value="EM"/>
    <property type="resolution" value="2.70 A"/>
    <property type="chains" value="G=1-338"/>
</dbReference>
<dbReference type="PDB" id="7OBA">
    <property type="method" value="EM"/>
    <property type="resolution" value="3.10 A"/>
    <property type="chains" value="G=1-338"/>
</dbReference>
<dbReference type="PDB" id="7OBB">
    <property type="method" value="EM"/>
    <property type="resolution" value="3.30 A"/>
    <property type="chains" value="G=1-338"/>
</dbReference>
<dbReference type="PDB" id="7VBA">
    <property type="method" value="EM"/>
    <property type="resolution" value="2.89 A"/>
    <property type="chains" value="G=1-338"/>
</dbReference>
<dbReference type="PDB" id="7VBB">
    <property type="method" value="EM"/>
    <property type="resolution" value="2.81 A"/>
    <property type="chains" value="G=1-338"/>
</dbReference>
<dbReference type="PDB" id="7VBC">
    <property type="method" value="EM"/>
    <property type="resolution" value="3.01 A"/>
    <property type="chains" value="G=1-338"/>
</dbReference>
<dbReference type="PDBsum" id="7OB9"/>
<dbReference type="PDBsum" id="7OBA"/>
<dbReference type="PDBsum" id="7OBB"/>
<dbReference type="PDBsum" id="7VBA"/>
<dbReference type="PDBsum" id="7VBB"/>
<dbReference type="PDBsum" id="7VBC"/>
<dbReference type="EMDB" id="EMD-12795"/>
<dbReference type="EMDB" id="EMD-12796"/>
<dbReference type="EMDB" id="EMD-12797"/>
<dbReference type="EMDB" id="EMD-31876"/>
<dbReference type="EMDB" id="EMD-31877"/>
<dbReference type="EMDB" id="EMD-31878"/>
<dbReference type="SMR" id="Q3B726"/>
<dbReference type="BioGRID" id="128759">
    <property type="interactions" value="64"/>
</dbReference>
<dbReference type="ComplexPortal" id="CPX-2386">
    <property type="entry name" value="DNA-directed RNA polymerase I complex"/>
</dbReference>
<dbReference type="FunCoup" id="Q3B726">
    <property type="interactions" value="2145"/>
</dbReference>
<dbReference type="IntAct" id="Q3B726">
    <property type="interactions" value="29"/>
</dbReference>
<dbReference type="MINT" id="Q3B726"/>
<dbReference type="STRING" id="9606.ENSP00000222567"/>
<dbReference type="GlyGen" id="Q3B726">
    <property type="glycosylation" value="1 site, 1 O-linked glycan (1 site)"/>
</dbReference>
<dbReference type="iPTMnet" id="Q3B726"/>
<dbReference type="PhosphoSitePlus" id="Q3B726"/>
<dbReference type="SwissPalm" id="Q3B726"/>
<dbReference type="BioMuta" id="TWISTNB"/>
<dbReference type="DMDM" id="121942339"/>
<dbReference type="jPOST" id="Q3B726"/>
<dbReference type="MassIVE" id="Q3B726"/>
<dbReference type="PaxDb" id="9606-ENSP00000222567"/>
<dbReference type="PeptideAtlas" id="Q3B726"/>
<dbReference type="ProteomicsDB" id="61646"/>
<dbReference type="Pumba" id="Q3B726"/>
<dbReference type="Antibodypedia" id="11907">
    <property type="antibodies" value="95 antibodies from 20 providers"/>
</dbReference>
<dbReference type="DNASU" id="221830"/>
<dbReference type="Ensembl" id="ENST00000222567.6">
    <property type="protein sequence ID" value="ENSP00000222567.5"/>
    <property type="gene ID" value="ENSG00000105849.6"/>
</dbReference>
<dbReference type="GeneID" id="221830"/>
<dbReference type="KEGG" id="hsa:221830"/>
<dbReference type="MANE-Select" id="ENST00000222567.6">
    <property type="protein sequence ID" value="ENSP00000222567.5"/>
    <property type="RefSeq nucleotide sequence ID" value="NM_001002926.2"/>
    <property type="RefSeq protein sequence ID" value="NP_001002926.1"/>
</dbReference>
<dbReference type="UCSC" id="uc003sup.2">
    <property type="organism name" value="human"/>
</dbReference>
<dbReference type="AGR" id="HGNC:18027"/>
<dbReference type="CTD" id="221830"/>
<dbReference type="DisGeNET" id="221830"/>
<dbReference type="GeneCards" id="POLR1F"/>
<dbReference type="HGNC" id="HGNC:18027">
    <property type="gene designation" value="POLR1F"/>
</dbReference>
<dbReference type="HPA" id="ENSG00000105849">
    <property type="expression patterns" value="Low tissue specificity"/>
</dbReference>
<dbReference type="MIM" id="608312">
    <property type="type" value="gene"/>
</dbReference>
<dbReference type="neXtProt" id="NX_Q3B726"/>
<dbReference type="OpenTargets" id="ENSG00000105849"/>
<dbReference type="VEuPathDB" id="HostDB:ENSG00000105849"/>
<dbReference type="eggNOG" id="KOG4134">
    <property type="taxonomic scope" value="Eukaryota"/>
</dbReference>
<dbReference type="GeneTree" id="ENSGT00390000005553"/>
<dbReference type="HOGENOM" id="CLU_048289_0_0_1"/>
<dbReference type="InParanoid" id="Q3B726"/>
<dbReference type="OMA" id="LWEEEPK"/>
<dbReference type="OrthoDB" id="10250504at2759"/>
<dbReference type="PAN-GO" id="Q3B726">
    <property type="GO annotations" value="1 GO annotation based on evolutionary models"/>
</dbReference>
<dbReference type="PhylomeDB" id="Q3B726"/>
<dbReference type="TreeFam" id="TF325602"/>
<dbReference type="PathwayCommons" id="Q3B726"/>
<dbReference type="Reactome" id="R-HSA-427413">
    <property type="pathway name" value="NoRC negatively regulates rRNA expression"/>
</dbReference>
<dbReference type="Reactome" id="R-HSA-5250924">
    <property type="pathway name" value="B-WICH complex positively regulates rRNA expression"/>
</dbReference>
<dbReference type="Reactome" id="R-HSA-73762">
    <property type="pathway name" value="RNA Polymerase I Transcription Initiation"/>
</dbReference>
<dbReference type="Reactome" id="R-HSA-73772">
    <property type="pathway name" value="RNA Polymerase I Promoter Escape"/>
</dbReference>
<dbReference type="Reactome" id="R-HSA-73863">
    <property type="pathway name" value="RNA Polymerase I Transcription Termination"/>
</dbReference>
<dbReference type="SignaLink" id="Q3B726"/>
<dbReference type="SIGNOR" id="Q3B726"/>
<dbReference type="BioGRID-ORCS" id="221830">
    <property type="hits" value="802 hits in 1160 CRISPR screens"/>
</dbReference>
<dbReference type="CD-CODE" id="91857CE7">
    <property type="entry name" value="Nucleolus"/>
</dbReference>
<dbReference type="ChiTaRS" id="TWISTNB">
    <property type="organism name" value="human"/>
</dbReference>
<dbReference type="GenomeRNAi" id="221830"/>
<dbReference type="Pharos" id="Q3B726">
    <property type="development level" value="Tdark"/>
</dbReference>
<dbReference type="PRO" id="PR:Q3B726"/>
<dbReference type="Proteomes" id="UP000005640">
    <property type="component" value="Chromosome 7"/>
</dbReference>
<dbReference type="RNAct" id="Q3B726">
    <property type="molecule type" value="protein"/>
</dbReference>
<dbReference type="Bgee" id="ENSG00000105849">
    <property type="expression patterns" value="Expressed in decidua and 178 other cell types or tissues"/>
</dbReference>
<dbReference type="GO" id="GO:0005654">
    <property type="term" value="C:nucleoplasm"/>
    <property type="evidence" value="ECO:0000304"/>
    <property type="project" value="Reactome"/>
</dbReference>
<dbReference type="GO" id="GO:0005736">
    <property type="term" value="C:RNA polymerase I complex"/>
    <property type="evidence" value="ECO:0000314"/>
    <property type="project" value="UniProtKB"/>
</dbReference>
<dbReference type="GO" id="GO:1990830">
    <property type="term" value="P:cellular response to leukemia inhibitory factor"/>
    <property type="evidence" value="ECO:0007669"/>
    <property type="project" value="Ensembl"/>
</dbReference>
<dbReference type="GO" id="GO:0006352">
    <property type="term" value="P:DNA-templated transcription initiation"/>
    <property type="evidence" value="ECO:0007669"/>
    <property type="project" value="InterPro"/>
</dbReference>
<dbReference type="GO" id="GO:0006362">
    <property type="term" value="P:transcription elongation by RNA polymerase I"/>
    <property type="evidence" value="ECO:0000318"/>
    <property type="project" value="GO_Central"/>
</dbReference>
<dbReference type="CDD" id="cd04328">
    <property type="entry name" value="RNAP_I_Rpa43_N"/>
    <property type="match status" value="1"/>
</dbReference>
<dbReference type="FunFam" id="3.30.1490.120:FF:000003">
    <property type="entry name" value="DNA-directed RNA polymerase I subunit RPA43"/>
    <property type="match status" value="1"/>
</dbReference>
<dbReference type="FunFam" id="2.40.50.1060:FF:000001">
    <property type="entry name" value="Twist neighbor protein"/>
    <property type="match status" value="1"/>
</dbReference>
<dbReference type="Gene3D" id="2.40.50.1060">
    <property type="match status" value="1"/>
</dbReference>
<dbReference type="Gene3D" id="3.30.1490.120">
    <property type="entry name" value="RNA polymerase Rpb7-like, N-terminal domain"/>
    <property type="match status" value="1"/>
</dbReference>
<dbReference type="InterPro" id="IPR036898">
    <property type="entry name" value="RNA_pol_Rpb7-like_N_sf"/>
</dbReference>
<dbReference type="InterPro" id="IPR041901">
    <property type="entry name" value="RNAP_I_Rpa43_N"/>
</dbReference>
<dbReference type="InterPro" id="IPR041178">
    <property type="entry name" value="RPA43_OB"/>
</dbReference>
<dbReference type="InterPro" id="IPR045113">
    <property type="entry name" value="Rpb7-like"/>
</dbReference>
<dbReference type="InterPro" id="IPR005576">
    <property type="entry name" value="Rpb7-like_N"/>
</dbReference>
<dbReference type="PANTHER" id="PTHR12709:SF5">
    <property type="entry name" value="DNA-DIRECTED RNA POLYMERASE I SUBUNIT RPA43"/>
    <property type="match status" value="1"/>
</dbReference>
<dbReference type="PANTHER" id="PTHR12709">
    <property type="entry name" value="DNA-DIRECTED RNA POLYMERASE II, III"/>
    <property type="match status" value="1"/>
</dbReference>
<dbReference type="Pfam" id="PF17875">
    <property type="entry name" value="RPA43_OB"/>
    <property type="match status" value="1"/>
</dbReference>
<dbReference type="Pfam" id="PF03876">
    <property type="entry name" value="SHS2_Rpb7-N"/>
    <property type="match status" value="1"/>
</dbReference>
<proteinExistence type="evidence at protein level"/>
<evidence type="ECO:0000250" key="1"/>
<evidence type="ECO:0000256" key="2">
    <source>
        <dbReference type="SAM" id="MobiDB-lite"/>
    </source>
</evidence>
<evidence type="ECO:0000269" key="3">
    <source>
    </source>
</evidence>
<evidence type="ECO:0000269" key="4">
    <source>
    </source>
</evidence>
<evidence type="ECO:0000269" key="5">
    <source>
    </source>
</evidence>
<evidence type="ECO:0000269" key="6">
    <source>
    </source>
</evidence>
<evidence type="ECO:0000269" key="7">
    <source>
    </source>
</evidence>
<evidence type="ECO:0000303" key="8">
    <source>
    </source>
</evidence>
<evidence type="ECO:0000305" key="9"/>
<evidence type="ECO:0000305" key="10">
    <source>
    </source>
</evidence>
<evidence type="ECO:0000305" key="11">
    <source>
    </source>
</evidence>
<evidence type="ECO:0000312" key="12">
    <source>
        <dbReference type="HGNC" id="HGNC:18027"/>
    </source>
</evidence>
<evidence type="ECO:0007744" key="13">
    <source>
    </source>
</evidence>
<evidence type="ECO:0007744" key="14">
    <source>
    </source>
</evidence>
<evidence type="ECO:0007744" key="15">
    <source>
    </source>
</evidence>
<evidence type="ECO:0007744" key="16">
    <source>
    </source>
</evidence>
<evidence type="ECO:0007744" key="17">
    <source>
    </source>
</evidence>
<evidence type="ECO:0007829" key="18">
    <source>
        <dbReference type="PDB" id="7OB9"/>
    </source>
</evidence>
<evidence type="ECO:0007829" key="19">
    <source>
        <dbReference type="PDB" id="7OBA"/>
    </source>
</evidence>
<protein>
    <recommendedName>
        <fullName>DNA-directed RNA polymerase I subunit RPA43</fullName>
    </recommendedName>
    <alternativeName>
        <fullName evidence="12">DNA-directed RNA polymerase I subunit F</fullName>
    </alternativeName>
    <alternativeName>
        <fullName evidence="10">Twist neighbor protein</fullName>
    </alternativeName>
</protein>
<reference key="1">
    <citation type="journal article" date="2004" name="Nat. Genet.">
        <title>Complete sequencing and characterization of 21,243 full-length human cDNAs.</title>
        <authorList>
            <person name="Ota T."/>
            <person name="Suzuki Y."/>
            <person name="Nishikawa T."/>
            <person name="Otsuki T."/>
            <person name="Sugiyama T."/>
            <person name="Irie R."/>
            <person name="Wakamatsu A."/>
            <person name="Hayashi K."/>
            <person name="Sato H."/>
            <person name="Nagai K."/>
            <person name="Kimura K."/>
            <person name="Makita H."/>
            <person name="Sekine M."/>
            <person name="Obayashi M."/>
            <person name="Nishi T."/>
            <person name="Shibahara T."/>
            <person name="Tanaka T."/>
            <person name="Ishii S."/>
            <person name="Yamamoto J."/>
            <person name="Saito K."/>
            <person name="Kawai Y."/>
            <person name="Isono Y."/>
            <person name="Nakamura Y."/>
            <person name="Nagahari K."/>
            <person name="Murakami K."/>
            <person name="Yasuda T."/>
            <person name="Iwayanagi T."/>
            <person name="Wagatsuma M."/>
            <person name="Shiratori A."/>
            <person name="Sudo H."/>
            <person name="Hosoiri T."/>
            <person name="Kaku Y."/>
            <person name="Kodaira H."/>
            <person name="Kondo H."/>
            <person name="Sugawara M."/>
            <person name="Takahashi M."/>
            <person name="Kanda K."/>
            <person name="Yokoi T."/>
            <person name="Furuya T."/>
            <person name="Kikkawa E."/>
            <person name="Omura Y."/>
            <person name="Abe K."/>
            <person name="Kamihara K."/>
            <person name="Katsuta N."/>
            <person name="Sato K."/>
            <person name="Tanikawa M."/>
            <person name="Yamazaki M."/>
            <person name="Ninomiya K."/>
            <person name="Ishibashi T."/>
            <person name="Yamashita H."/>
            <person name="Murakawa K."/>
            <person name="Fujimori K."/>
            <person name="Tanai H."/>
            <person name="Kimata M."/>
            <person name="Watanabe M."/>
            <person name="Hiraoka S."/>
            <person name="Chiba Y."/>
            <person name="Ishida S."/>
            <person name="Ono Y."/>
            <person name="Takiguchi S."/>
            <person name="Watanabe S."/>
            <person name="Yosida M."/>
            <person name="Hotuta T."/>
            <person name="Kusano J."/>
            <person name="Kanehori K."/>
            <person name="Takahashi-Fujii A."/>
            <person name="Hara H."/>
            <person name="Tanase T.-O."/>
            <person name="Nomura Y."/>
            <person name="Togiya S."/>
            <person name="Komai F."/>
            <person name="Hara R."/>
            <person name="Takeuchi K."/>
            <person name="Arita M."/>
            <person name="Imose N."/>
            <person name="Musashino K."/>
            <person name="Yuuki H."/>
            <person name="Oshima A."/>
            <person name="Sasaki N."/>
            <person name="Aotsuka S."/>
            <person name="Yoshikawa Y."/>
            <person name="Matsunawa H."/>
            <person name="Ichihara T."/>
            <person name="Shiohata N."/>
            <person name="Sano S."/>
            <person name="Moriya S."/>
            <person name="Momiyama H."/>
            <person name="Satoh N."/>
            <person name="Takami S."/>
            <person name="Terashima Y."/>
            <person name="Suzuki O."/>
            <person name="Nakagawa S."/>
            <person name="Senoh A."/>
            <person name="Mizoguchi H."/>
            <person name="Goto Y."/>
            <person name="Shimizu F."/>
            <person name="Wakebe H."/>
            <person name="Hishigaki H."/>
            <person name="Watanabe T."/>
            <person name="Sugiyama A."/>
            <person name="Takemoto M."/>
            <person name="Kawakami B."/>
            <person name="Yamazaki M."/>
            <person name="Watanabe K."/>
            <person name="Kumagai A."/>
            <person name="Itakura S."/>
            <person name="Fukuzumi Y."/>
            <person name="Fujimori Y."/>
            <person name="Komiyama M."/>
            <person name="Tashiro H."/>
            <person name="Tanigami A."/>
            <person name="Fujiwara T."/>
            <person name="Ono T."/>
            <person name="Yamada K."/>
            <person name="Fujii Y."/>
            <person name="Ozaki K."/>
            <person name="Hirao M."/>
            <person name="Ohmori Y."/>
            <person name="Kawabata A."/>
            <person name="Hikiji T."/>
            <person name="Kobatake N."/>
            <person name="Inagaki H."/>
            <person name="Ikema Y."/>
            <person name="Okamoto S."/>
            <person name="Okitani R."/>
            <person name="Kawakami T."/>
            <person name="Noguchi S."/>
            <person name="Itoh T."/>
            <person name="Shigeta K."/>
            <person name="Senba T."/>
            <person name="Matsumura K."/>
            <person name="Nakajima Y."/>
            <person name="Mizuno T."/>
            <person name="Morinaga M."/>
            <person name="Sasaki M."/>
            <person name="Togashi T."/>
            <person name="Oyama M."/>
            <person name="Hata H."/>
            <person name="Watanabe M."/>
            <person name="Komatsu T."/>
            <person name="Mizushima-Sugano J."/>
            <person name="Satoh T."/>
            <person name="Shirai Y."/>
            <person name="Takahashi Y."/>
            <person name="Nakagawa K."/>
            <person name="Okumura K."/>
            <person name="Nagase T."/>
            <person name="Nomura N."/>
            <person name="Kikuchi H."/>
            <person name="Masuho Y."/>
            <person name="Yamashita R."/>
            <person name="Nakai K."/>
            <person name="Yada T."/>
            <person name="Nakamura Y."/>
            <person name="Ohara O."/>
            <person name="Isogai T."/>
            <person name="Sugano S."/>
        </authorList>
    </citation>
    <scope>NUCLEOTIDE SEQUENCE [LARGE SCALE MRNA]</scope>
    <source>
        <tissue>Synovium</tissue>
    </source>
</reference>
<reference key="2">
    <citation type="journal article" date="2003" name="Science">
        <title>Human chromosome 7: DNA sequence and biology.</title>
        <authorList>
            <person name="Scherer S.W."/>
            <person name="Cheung J."/>
            <person name="MacDonald J.R."/>
            <person name="Osborne L.R."/>
            <person name="Nakabayashi K."/>
            <person name="Herbrick J.-A."/>
            <person name="Carson A.R."/>
            <person name="Parker-Katiraee L."/>
            <person name="Skaug J."/>
            <person name="Khaja R."/>
            <person name="Zhang J."/>
            <person name="Hudek A.K."/>
            <person name="Li M."/>
            <person name="Haddad M."/>
            <person name="Duggan G.E."/>
            <person name="Fernandez B.A."/>
            <person name="Kanematsu E."/>
            <person name="Gentles S."/>
            <person name="Christopoulos C.C."/>
            <person name="Choufani S."/>
            <person name="Kwasnicka D."/>
            <person name="Zheng X.H."/>
            <person name="Lai Z."/>
            <person name="Nusskern D.R."/>
            <person name="Zhang Q."/>
            <person name="Gu Z."/>
            <person name="Lu F."/>
            <person name="Zeesman S."/>
            <person name="Nowaczyk M.J."/>
            <person name="Teshima I."/>
            <person name="Chitayat D."/>
            <person name="Shuman C."/>
            <person name="Weksberg R."/>
            <person name="Zackai E.H."/>
            <person name="Grebe T.A."/>
            <person name="Cox S.R."/>
            <person name="Kirkpatrick S.J."/>
            <person name="Rahman N."/>
            <person name="Friedman J.M."/>
            <person name="Heng H.H.Q."/>
            <person name="Pelicci P.G."/>
            <person name="Lo-Coco F."/>
            <person name="Belloni E."/>
            <person name="Shaffer L.G."/>
            <person name="Pober B."/>
            <person name="Morton C.C."/>
            <person name="Gusella J.F."/>
            <person name="Bruns G.A.P."/>
            <person name="Korf B.R."/>
            <person name="Quade B.J."/>
            <person name="Ligon A.H."/>
            <person name="Ferguson H."/>
            <person name="Higgins A.W."/>
            <person name="Leach N.T."/>
            <person name="Herrick S.R."/>
            <person name="Lemyre E."/>
            <person name="Farra C.G."/>
            <person name="Kim H.-G."/>
            <person name="Summers A.M."/>
            <person name="Gripp K.W."/>
            <person name="Roberts W."/>
            <person name="Szatmari P."/>
            <person name="Winsor E.J.T."/>
            <person name="Grzeschik K.-H."/>
            <person name="Teebi A."/>
            <person name="Minassian B.A."/>
            <person name="Kere J."/>
            <person name="Armengol L."/>
            <person name="Pujana M.A."/>
            <person name="Estivill X."/>
            <person name="Wilson M.D."/>
            <person name="Koop B.F."/>
            <person name="Tosi S."/>
            <person name="Moore G.E."/>
            <person name="Boright A.P."/>
            <person name="Zlotorynski E."/>
            <person name="Kerem B."/>
            <person name="Kroisel P.M."/>
            <person name="Petek E."/>
            <person name="Oscier D.G."/>
            <person name="Mould S.J."/>
            <person name="Doehner H."/>
            <person name="Doehner K."/>
            <person name="Rommens J.M."/>
            <person name="Vincent J.B."/>
            <person name="Venter J.C."/>
            <person name="Li P.W."/>
            <person name="Mural R.J."/>
            <person name="Adams M.D."/>
            <person name="Tsui L.-C."/>
        </authorList>
    </citation>
    <scope>NUCLEOTIDE SEQUENCE [LARGE SCALE GENOMIC DNA]</scope>
</reference>
<reference key="3">
    <citation type="submission" date="2005-07" db="EMBL/GenBank/DDBJ databases">
        <authorList>
            <person name="Mural R.J."/>
            <person name="Istrail S."/>
            <person name="Sutton G.G."/>
            <person name="Florea L."/>
            <person name="Halpern A.L."/>
            <person name="Mobarry C.M."/>
            <person name="Lippert R."/>
            <person name="Walenz B."/>
            <person name="Shatkay H."/>
            <person name="Dew I."/>
            <person name="Miller J.R."/>
            <person name="Flanigan M.J."/>
            <person name="Edwards N.J."/>
            <person name="Bolanos R."/>
            <person name="Fasulo D."/>
            <person name="Halldorsson B.V."/>
            <person name="Hannenhalli S."/>
            <person name="Turner R."/>
            <person name="Yooseph S."/>
            <person name="Lu F."/>
            <person name="Nusskern D.R."/>
            <person name="Shue B.C."/>
            <person name="Zheng X.H."/>
            <person name="Zhong F."/>
            <person name="Delcher A.L."/>
            <person name="Huson D.H."/>
            <person name="Kravitz S.A."/>
            <person name="Mouchard L."/>
            <person name="Reinert K."/>
            <person name="Remington K.A."/>
            <person name="Clark A.G."/>
            <person name="Waterman M.S."/>
            <person name="Eichler E.E."/>
            <person name="Adams M.D."/>
            <person name="Hunkapiller M.W."/>
            <person name="Myers E.W."/>
            <person name="Venter J.C."/>
        </authorList>
    </citation>
    <scope>NUCLEOTIDE SEQUENCE [LARGE SCALE GENOMIC DNA]</scope>
</reference>
<reference key="4">
    <citation type="journal article" date="2004" name="Genome Res.">
        <title>The status, quality, and expansion of the NIH full-length cDNA project: the Mammalian Gene Collection (MGC).</title>
        <authorList>
            <consortium name="The MGC Project Team"/>
        </authorList>
    </citation>
    <scope>NUCLEOTIDE SEQUENCE [LARGE SCALE MRNA]</scope>
    <source>
        <tissue>Urinary bladder</tissue>
    </source>
</reference>
<reference key="5">
    <citation type="journal article" date="2002" name="Cytogenet. Genome Res.">
        <title>Identification and characterisation of the gene TWIST NEIGHBOR (TWISTNB) located in the microdeletion syndrome 7p21 region.</title>
        <authorList>
            <person name="Kosan C."/>
            <person name="Kunz J."/>
        </authorList>
    </citation>
    <scope>IDENTIFICATION</scope>
    <scope>TISSUE SPECIFICITY</scope>
</reference>
<reference key="6">
    <citation type="journal article" date="2002" name="EMBO Rep.">
        <title>Multiple interactions between RNA polymerase I, TIF-IA and TAF(I) subunits regulate preinitiation complex assembly at the ribosomal gene promoter.</title>
        <authorList>
            <person name="Yuan X."/>
            <person name="Zhao J."/>
            <person name="Zentgraf H."/>
            <person name="Hoffmann-Rohrer U."/>
            <person name="Grummt I."/>
        </authorList>
    </citation>
    <scope>INTERACTION WITH RRN3</scope>
</reference>
<reference key="7">
    <citation type="journal article" date="2006" name="Cell">
        <title>Global, in vivo, and site-specific phosphorylation dynamics in signaling networks.</title>
        <authorList>
            <person name="Olsen J.V."/>
            <person name="Blagoev B."/>
            <person name="Gnad F."/>
            <person name="Macek B."/>
            <person name="Kumar C."/>
            <person name="Mortensen P."/>
            <person name="Mann M."/>
        </authorList>
    </citation>
    <scope>PHOSPHORYLATION [LARGE SCALE ANALYSIS] AT SER-316 AND SER-328</scope>
    <scope>IDENTIFICATION BY MASS SPECTROMETRY [LARGE SCALE ANALYSIS]</scope>
    <source>
        <tissue>Cervix carcinoma</tissue>
    </source>
</reference>
<reference key="8">
    <citation type="journal article" date="2008" name="J. Proteome Res.">
        <title>Combining protein-based IMAC, peptide-based IMAC, and MudPIT for efficient phosphoproteomic analysis.</title>
        <authorList>
            <person name="Cantin G.T."/>
            <person name="Yi W."/>
            <person name="Lu B."/>
            <person name="Park S.K."/>
            <person name="Xu T."/>
            <person name="Lee J.-D."/>
            <person name="Yates J.R. III"/>
        </authorList>
    </citation>
    <scope>IDENTIFICATION BY MASS SPECTROMETRY [LARGE SCALE ANALYSIS]</scope>
    <source>
        <tissue>Cervix carcinoma</tissue>
    </source>
</reference>
<reference key="9">
    <citation type="journal article" date="2008" name="Proc. Natl. Acad. Sci. U.S.A.">
        <title>A quantitative atlas of mitotic phosphorylation.</title>
        <authorList>
            <person name="Dephoure N."/>
            <person name="Zhou C."/>
            <person name="Villen J."/>
            <person name="Beausoleil S.A."/>
            <person name="Bakalarski C.E."/>
            <person name="Elledge S.J."/>
            <person name="Gygi S.P."/>
        </authorList>
    </citation>
    <scope>PHOSPHORYLATION [LARGE SCALE ANALYSIS] AT SER-316 AND SER-328</scope>
    <scope>IDENTIFICATION BY MASS SPECTROMETRY [LARGE SCALE ANALYSIS]</scope>
    <source>
        <tissue>Cervix carcinoma</tissue>
    </source>
</reference>
<reference key="10">
    <citation type="journal article" date="2010" name="Sci. Signal.">
        <title>Quantitative phosphoproteomics reveals widespread full phosphorylation site occupancy during mitosis.</title>
        <authorList>
            <person name="Olsen J.V."/>
            <person name="Vermeulen M."/>
            <person name="Santamaria A."/>
            <person name="Kumar C."/>
            <person name="Miller M.L."/>
            <person name="Jensen L.J."/>
            <person name="Gnad F."/>
            <person name="Cox J."/>
            <person name="Jensen T.S."/>
            <person name="Nigg E.A."/>
            <person name="Brunak S."/>
            <person name="Mann M."/>
        </authorList>
    </citation>
    <scope>PHOSPHORYLATION [LARGE SCALE ANALYSIS] AT SER-316</scope>
    <scope>IDENTIFICATION BY MASS SPECTROMETRY [LARGE SCALE ANALYSIS]</scope>
    <source>
        <tissue>Cervix carcinoma</tissue>
    </source>
</reference>
<reference key="11">
    <citation type="journal article" date="2011" name="Sci. Signal.">
        <title>System-wide temporal characterization of the proteome and phosphoproteome of human embryonic stem cell differentiation.</title>
        <authorList>
            <person name="Rigbolt K.T."/>
            <person name="Prokhorova T.A."/>
            <person name="Akimov V."/>
            <person name="Henningsen J."/>
            <person name="Johansen P.T."/>
            <person name="Kratchmarova I."/>
            <person name="Kassem M."/>
            <person name="Mann M."/>
            <person name="Olsen J.V."/>
            <person name="Blagoev B."/>
        </authorList>
    </citation>
    <scope>PHOSPHORYLATION [LARGE SCALE ANALYSIS] AT SER-316</scope>
    <scope>IDENTIFICATION BY MASS SPECTROMETRY [LARGE SCALE ANALYSIS]</scope>
</reference>
<reference key="12">
    <citation type="journal article" date="2013" name="J. Proteome Res.">
        <title>Toward a comprehensive characterization of a human cancer cell phosphoproteome.</title>
        <authorList>
            <person name="Zhou H."/>
            <person name="Di Palma S."/>
            <person name="Preisinger C."/>
            <person name="Peng M."/>
            <person name="Polat A.N."/>
            <person name="Heck A.J."/>
            <person name="Mohammed S."/>
        </authorList>
    </citation>
    <scope>PHOSPHORYLATION [LARGE SCALE ANALYSIS] AT SER-242; SER-304; SER-316; THR-322 AND SER-328</scope>
    <scope>IDENTIFICATION BY MASS SPECTROMETRY [LARGE SCALE ANALYSIS]</scope>
    <source>
        <tissue>Cervix carcinoma</tissue>
        <tissue>Erythroleukemia</tissue>
    </source>
</reference>
<reference key="13">
    <citation type="journal article" date="2022" name="Life. Sci Alliance">
        <title>The human RNA polymerase I structure reveals an HMG-like docking domain specific to metazoans.</title>
        <authorList>
            <person name="Daiss J.L."/>
            <person name="Pilsl M."/>
            <person name="Straub K."/>
            <person name="Bleckmann A."/>
            <person name="Hocherl M."/>
            <person name="Heiss F.B."/>
            <person name="Abascal-Palacios G."/>
            <person name="Ramsay E.P."/>
            <person name="Tluckova K."/>
            <person name="Mars J.C."/>
            <person name="Furtges T."/>
            <person name="Bruckmann A."/>
            <person name="Rudack T."/>
            <person name="Bernecky C."/>
            <person name="Lamour V."/>
            <person name="Panov K."/>
            <person name="Vannini A."/>
            <person name="Moss T."/>
            <person name="Engel C."/>
        </authorList>
    </citation>
    <scope>FUNCTION OF POL I</scope>
    <scope>SUBUNIT</scope>
</reference>
<reference key="14">
    <citation type="journal article" date="2021" name="Cell Discov.">
        <title>Structure of the human RNA polymerase I elongation complex.</title>
        <authorList>
            <person name="Zhao D."/>
            <person name="Liu W."/>
            <person name="Chen K."/>
            <person name="Wu Z."/>
            <person name="Yang H."/>
            <person name="Xu Y."/>
        </authorList>
    </citation>
    <scope>STRUCTURE BY ELECTRON MICROSCOPY (2.81 ANGSTROMS)</scope>
    <scope>FUNCTION OF POL I</scope>
    <scope>SUBUNIT</scope>
</reference>
<reference key="15">
    <citation type="journal article" date="2021" name="Nat. Struct. Mol. Biol.">
        <title>Cryo-EM structures of human RNA polymerase I.</title>
        <authorList>
            <person name="Misiaszek A.D."/>
            <person name="Girbig M."/>
            <person name="Grotsch H."/>
            <person name="Baudin F."/>
            <person name="Murciano B."/>
            <person name="Lafita A."/>
            <person name="Muller C.W."/>
        </authorList>
    </citation>
    <scope>STRUCTURE BY ELECTRON MICROSCOPY (2.70 ANGSTROMS)</scope>
    <scope>FUNCTION OF POL I</scope>
    <scope>SUBUNIT</scope>
    <scope>SUBCELLULAR LOCATION</scope>
</reference>
<organism>
    <name type="scientific">Homo sapiens</name>
    <name type="common">Human</name>
    <dbReference type="NCBI Taxonomy" id="9606"/>
    <lineage>
        <taxon>Eukaryota</taxon>
        <taxon>Metazoa</taxon>
        <taxon>Chordata</taxon>
        <taxon>Craniata</taxon>
        <taxon>Vertebrata</taxon>
        <taxon>Euteleostomi</taxon>
        <taxon>Mammalia</taxon>
        <taxon>Eutheria</taxon>
        <taxon>Euarchontoglires</taxon>
        <taxon>Primates</taxon>
        <taxon>Haplorrhini</taxon>
        <taxon>Catarrhini</taxon>
        <taxon>Hominidae</taxon>
        <taxon>Homo</taxon>
    </lineage>
</organism>
<accession>Q3B726</accession>
<accession>A0PJ45</accession>
<accession>B7Z724</accession>
<sequence>MAAGCSEAPRPAAASDGSLVGQAGVLPCLELPTYAAACALVNSRYSCLVAGPHQRHIALSPRYLNRKRTGIREQLDAELLRYSESLLGVPIAYDNIKVVGELGDIYDDQGHIHLNIEADFVIFCPEPGQKLMGIVNKVSSSHIGCLVHGCFNASIPKPEQLSAEQWQTMEINMGDELEFEVFRLDSDAAGVFCIRGKLNITSLQFKRSEVSEEVTENGTEEAAKKPKKKKKKKDPETYEVDSGTTKLADDADDTPMEESALQNTNNANGIWEEEPKKKKKKKKHQEVQDQDPVFQGSDSSGYQSDHKKKKKKRKHSEEAEFTPPLKCSPKRKGKSNFL</sequence>